<dbReference type="EMBL" id="X74464">
    <property type="protein sequence ID" value="CAA52484.1"/>
    <property type="molecule type" value="Genomic_DNA"/>
</dbReference>
<dbReference type="PIR" id="S36591">
    <property type="entry name" value="S36591"/>
</dbReference>
<dbReference type="RefSeq" id="NP_041862.1">
    <property type="nucleotide sequence ID" value="NC_001596.1"/>
</dbReference>
<dbReference type="SMR" id="P36817"/>
<dbReference type="BioGRID" id="3509188">
    <property type="interactions" value="52"/>
</dbReference>
<dbReference type="IntAct" id="P36817">
    <property type="interactions" value="35"/>
</dbReference>
<dbReference type="MINT" id="P36817"/>
<dbReference type="DNASU" id="1489481"/>
<dbReference type="GeneID" id="1489481"/>
<dbReference type="KEGG" id="vg:1489481"/>
<dbReference type="OrthoDB" id="28045at10239"/>
<dbReference type="Proteomes" id="UP000009104">
    <property type="component" value="Genome"/>
</dbReference>
<dbReference type="GO" id="GO:0030430">
    <property type="term" value="C:host cell cytoplasm"/>
    <property type="evidence" value="ECO:0007669"/>
    <property type="project" value="UniProtKB-SubCell"/>
</dbReference>
<dbReference type="GO" id="GO:0042025">
    <property type="term" value="C:host cell nucleus"/>
    <property type="evidence" value="ECO:0007669"/>
    <property type="project" value="UniProtKB-SubCell"/>
</dbReference>
<dbReference type="GO" id="GO:0003677">
    <property type="term" value="F:DNA binding"/>
    <property type="evidence" value="ECO:0007669"/>
    <property type="project" value="UniProtKB-UniRule"/>
</dbReference>
<dbReference type="GO" id="GO:0003700">
    <property type="term" value="F:DNA-binding transcription factor activity"/>
    <property type="evidence" value="ECO:0007669"/>
    <property type="project" value="UniProtKB-UniRule"/>
</dbReference>
<dbReference type="GO" id="GO:0019904">
    <property type="term" value="F:protein domain specific binding"/>
    <property type="evidence" value="ECO:0007669"/>
    <property type="project" value="UniProtKB-UniRule"/>
</dbReference>
<dbReference type="GO" id="GO:0008270">
    <property type="term" value="F:zinc ion binding"/>
    <property type="evidence" value="ECO:0007669"/>
    <property type="project" value="UniProtKB-KW"/>
</dbReference>
<dbReference type="GO" id="GO:0006351">
    <property type="term" value="P:DNA-templated transcription"/>
    <property type="evidence" value="ECO:0007669"/>
    <property type="project" value="UniProtKB-UniRule"/>
</dbReference>
<dbReference type="GO" id="GO:0039645">
    <property type="term" value="P:symbiont-mediated perturbation of host cell cycle G1/S transition checkpoint"/>
    <property type="evidence" value="ECO:0007669"/>
    <property type="project" value="UniProtKB-UniRule"/>
</dbReference>
<dbReference type="GO" id="GO:0052170">
    <property type="term" value="P:symbiont-mediated suppression of host innate immune response"/>
    <property type="evidence" value="ECO:0007669"/>
    <property type="project" value="UniProtKB-KW"/>
</dbReference>
<dbReference type="GO" id="GO:0039502">
    <property type="term" value="P:symbiont-mediated suppression of host type I interferon-mediated signaling pathway"/>
    <property type="evidence" value="ECO:0007669"/>
    <property type="project" value="UniProtKB-UniRule"/>
</dbReference>
<dbReference type="Gene3D" id="3.30.160.330">
    <property type="match status" value="1"/>
</dbReference>
<dbReference type="HAMAP" id="MF_04004">
    <property type="entry name" value="PPV_E7"/>
    <property type="match status" value="1"/>
</dbReference>
<dbReference type="InterPro" id="IPR000148">
    <property type="entry name" value="Papilloma_E7"/>
</dbReference>
<dbReference type="Pfam" id="PF00527">
    <property type="entry name" value="E7"/>
    <property type="match status" value="1"/>
</dbReference>
<dbReference type="PIRSF" id="PIRSF003407">
    <property type="entry name" value="Papvi_E7"/>
    <property type="match status" value="1"/>
</dbReference>
<dbReference type="SUPFAM" id="SSF161234">
    <property type="entry name" value="E7 C-terminal domain-like"/>
    <property type="match status" value="1"/>
</dbReference>
<gene>
    <name evidence="1" type="primary">E7</name>
</gene>
<organism>
    <name type="scientific">Human papillomavirus 9</name>
    <dbReference type="NCBI Taxonomy" id="10621"/>
    <lineage>
        <taxon>Viruses</taxon>
        <taxon>Monodnaviria</taxon>
        <taxon>Shotokuvirae</taxon>
        <taxon>Cossaviricota</taxon>
        <taxon>Papovaviricetes</taxon>
        <taxon>Zurhausenvirales</taxon>
        <taxon>Papillomaviridae</taxon>
        <taxon>Firstpapillomavirinae</taxon>
        <taxon>Betapapillomavirus</taxon>
        <taxon>Betapapillomavirus 2</taxon>
    </lineage>
</organism>
<evidence type="ECO:0000255" key="1">
    <source>
        <dbReference type="HAMAP-Rule" id="MF_04004"/>
    </source>
</evidence>
<sequence length="93" mass="10392">MIGKEATIPEVVLELQELVQPTADLHCYEELTEEPAEEEQCLTPYKIVAGCGCGARLRLYVLATNLGIRAQQELLLGDIQLVCPECRGRLRHE</sequence>
<organismHost>
    <name type="scientific">Homo sapiens</name>
    <name type="common">Human</name>
    <dbReference type="NCBI Taxonomy" id="9606"/>
</organismHost>
<accession>P36817</accession>
<comment type="function">
    <text evidence="1">Plays a role in viral genome replication by driving entry of quiescent cells into the cell cycle. Stimulation of progression from G1 to S phase allows the virus to efficiently use the cellular DNA replicating machinery to achieve viral genome replication. E7 protein has both transforming and trans-activating activities. Induces the disassembly of the E2F1 transcription factor from RB1, with subsequent transcriptional activation of E2F1-regulated S-phase genes. Interferes with host histone deacetylation mediated by HDAC1 and HDAC2, leading to transcription activation. Also plays a role in the inhibition of both antiviral and antiproliferative functions of host interferon alpha. Interaction with host TMEM173/STING impairs the ability of TMEM173/STING to sense cytosolic DNA and promote the production of type I interferon (IFN-alpha and IFN-beta).</text>
</comment>
<comment type="subunit">
    <text evidence="1">Homodimer. Homooligomer. Interacts with host RB1; this interaction induces dissociation of RB1-E2F1 complex thereby disrupting RB1 activity. Interacts with host EP300; this interaction represses EP300 transcriptional activity. Interacts with protein E2; this interaction inhibits E7 oncogenic activity. Interacts with host TMEM173/STING; this interaction impairs the ability of TMEM173/STING to sense cytosolic DNA and promote the production of type I interferon (IFN-alpha and IFN-beta).</text>
</comment>
<comment type="subcellular location">
    <subcellularLocation>
        <location evidence="1">Host cytoplasm</location>
    </subcellularLocation>
    <subcellularLocation>
        <location evidence="1">Host nucleus</location>
    </subcellularLocation>
    <text evidence="1">Predominantly found in the host nucleus.</text>
</comment>
<comment type="domain">
    <text evidence="1">The E7 terminal domain is an intrinsically disordered domain, whose flexibility and conformational transitions confer target adaptability to the oncoprotein. It allows adaptation to a variety of protein targets and exposes the PEST degradation sequence that regulates its turnover in the cell.</text>
</comment>
<comment type="PTM">
    <text evidence="1">Highly phosphorylated.</text>
</comment>
<comment type="similarity">
    <text evidence="1">Belongs to the papillomaviridae E7 protein family.</text>
</comment>
<keyword id="KW-0010">Activator</keyword>
<keyword id="KW-0238">DNA-binding</keyword>
<keyword id="KW-0244">Early protein</keyword>
<keyword id="KW-1078">G1/S host cell cycle checkpoint dysregulation by virus</keyword>
<keyword id="KW-1035">Host cytoplasm</keyword>
<keyword id="KW-1048">Host nucleus</keyword>
<keyword id="KW-0945">Host-virus interaction</keyword>
<keyword id="KW-1090">Inhibition of host innate immune response by virus</keyword>
<keyword id="KW-1114">Inhibition of host interferon signaling pathway by virus</keyword>
<keyword id="KW-0922">Interferon antiviral system evasion</keyword>
<keyword id="KW-0479">Metal-binding</keyword>
<keyword id="KW-1121">Modulation of host cell cycle by virus</keyword>
<keyword id="KW-0553">Oncogene</keyword>
<keyword id="KW-1185">Reference proteome</keyword>
<keyword id="KW-0804">Transcription</keyword>
<keyword id="KW-0805">Transcription regulation</keyword>
<keyword id="KW-0899">Viral immunoevasion</keyword>
<keyword id="KW-0862">Zinc</keyword>
<keyword id="KW-0863">Zinc-finger</keyword>
<protein>
    <recommendedName>
        <fullName evidence="1">Protein E7</fullName>
    </recommendedName>
</protein>
<proteinExistence type="inferred from homology"/>
<reference key="1">
    <citation type="journal article" date="1994" name="Curr. Top. Microbiol. Immunol.">
        <title>Primer-directed sequencing of human papillomavirus types.</title>
        <authorList>
            <person name="Delius H."/>
            <person name="Hofmann B."/>
        </authorList>
    </citation>
    <scope>NUCLEOTIDE SEQUENCE [GENOMIC DNA]</scope>
</reference>
<reference key="2">
    <citation type="journal article" date="2002" name="Rev. Med. Virol.">
        <title>Interactions of SV40 large T antigen and other viral proteins with retinoblastoma tumour suppressor.</title>
        <authorList>
            <person name="Lee C."/>
            <person name="Cho Y."/>
        </authorList>
    </citation>
    <scope>REVIEW</scope>
</reference>
<feature type="chain" id="PRO_0000133408" description="Protein E7">
    <location>
        <begin position="1"/>
        <end position="93"/>
    </location>
</feature>
<feature type="zinc finger region" evidence="1">
    <location>
        <begin position="51"/>
        <end position="86"/>
    </location>
</feature>
<feature type="region of interest" description="E7 terminal domain" evidence="1">
    <location>
        <begin position="1"/>
        <end position="43"/>
    </location>
</feature>
<feature type="short sequence motif" description="LXCXE motif; interaction with host RB1 and TMEM173/STING" evidence="1">
    <location>
        <begin position="25"/>
        <end position="29"/>
    </location>
</feature>
<feature type="short sequence motif" description="Nuclear export signal" evidence="1">
    <location>
        <begin position="68"/>
        <end position="76"/>
    </location>
</feature>
<name>VE7_HPV09</name>